<sequence length="142" mass="15018">MAKKVAGQLKLQVPAGAANPSPPIGPALGQRGINIMEFCKAFNAASQEMEKGSPIPVLITYYQDKSFTFVMKTPPVTYFLKKAANLKSGSKTPGKASAGTITRDKVRAIAEAKMKDLNAADVEAAMRMIEGSARSMGLEVVG</sequence>
<proteinExistence type="inferred from homology"/>
<dbReference type="EMBL" id="CP000887">
    <property type="protein sequence ID" value="ACD72688.1"/>
    <property type="molecule type" value="Genomic_DNA"/>
</dbReference>
<dbReference type="RefSeq" id="WP_002964374.1">
    <property type="nucleotide sequence ID" value="NC_010742.1"/>
</dbReference>
<dbReference type="SMR" id="B2S691"/>
<dbReference type="GeneID" id="97533513"/>
<dbReference type="KEGG" id="bmc:BAbS19_I11830"/>
<dbReference type="HOGENOM" id="CLU_074237_2_0_5"/>
<dbReference type="Proteomes" id="UP000002565">
    <property type="component" value="Chromosome 1"/>
</dbReference>
<dbReference type="GO" id="GO:0022625">
    <property type="term" value="C:cytosolic large ribosomal subunit"/>
    <property type="evidence" value="ECO:0007669"/>
    <property type="project" value="TreeGrafter"/>
</dbReference>
<dbReference type="GO" id="GO:0070180">
    <property type="term" value="F:large ribosomal subunit rRNA binding"/>
    <property type="evidence" value="ECO:0007669"/>
    <property type="project" value="UniProtKB-UniRule"/>
</dbReference>
<dbReference type="GO" id="GO:0003735">
    <property type="term" value="F:structural constituent of ribosome"/>
    <property type="evidence" value="ECO:0007669"/>
    <property type="project" value="InterPro"/>
</dbReference>
<dbReference type="GO" id="GO:0006412">
    <property type="term" value="P:translation"/>
    <property type="evidence" value="ECO:0007669"/>
    <property type="project" value="UniProtKB-UniRule"/>
</dbReference>
<dbReference type="CDD" id="cd00349">
    <property type="entry name" value="Ribosomal_L11"/>
    <property type="match status" value="1"/>
</dbReference>
<dbReference type="FunFam" id="1.10.10.250:FF:000001">
    <property type="entry name" value="50S ribosomal protein L11"/>
    <property type="match status" value="1"/>
</dbReference>
<dbReference type="FunFam" id="3.30.1550.10:FF:000001">
    <property type="entry name" value="50S ribosomal protein L11"/>
    <property type="match status" value="1"/>
</dbReference>
<dbReference type="Gene3D" id="1.10.10.250">
    <property type="entry name" value="Ribosomal protein L11, C-terminal domain"/>
    <property type="match status" value="1"/>
</dbReference>
<dbReference type="Gene3D" id="3.30.1550.10">
    <property type="entry name" value="Ribosomal protein L11/L12, N-terminal domain"/>
    <property type="match status" value="1"/>
</dbReference>
<dbReference type="HAMAP" id="MF_00736">
    <property type="entry name" value="Ribosomal_uL11"/>
    <property type="match status" value="1"/>
</dbReference>
<dbReference type="InterPro" id="IPR000911">
    <property type="entry name" value="Ribosomal_uL11"/>
</dbReference>
<dbReference type="InterPro" id="IPR006519">
    <property type="entry name" value="Ribosomal_uL11_bac-typ"/>
</dbReference>
<dbReference type="InterPro" id="IPR020783">
    <property type="entry name" value="Ribosomal_uL11_C"/>
</dbReference>
<dbReference type="InterPro" id="IPR036769">
    <property type="entry name" value="Ribosomal_uL11_C_sf"/>
</dbReference>
<dbReference type="InterPro" id="IPR020785">
    <property type="entry name" value="Ribosomal_uL11_CS"/>
</dbReference>
<dbReference type="InterPro" id="IPR020784">
    <property type="entry name" value="Ribosomal_uL11_N"/>
</dbReference>
<dbReference type="InterPro" id="IPR036796">
    <property type="entry name" value="Ribosomal_uL11_N_sf"/>
</dbReference>
<dbReference type="NCBIfam" id="TIGR01632">
    <property type="entry name" value="L11_bact"/>
    <property type="match status" value="1"/>
</dbReference>
<dbReference type="PANTHER" id="PTHR11661">
    <property type="entry name" value="60S RIBOSOMAL PROTEIN L12"/>
    <property type="match status" value="1"/>
</dbReference>
<dbReference type="PANTHER" id="PTHR11661:SF1">
    <property type="entry name" value="LARGE RIBOSOMAL SUBUNIT PROTEIN UL11M"/>
    <property type="match status" value="1"/>
</dbReference>
<dbReference type="Pfam" id="PF00298">
    <property type="entry name" value="Ribosomal_L11"/>
    <property type="match status" value="1"/>
</dbReference>
<dbReference type="Pfam" id="PF03946">
    <property type="entry name" value="Ribosomal_L11_N"/>
    <property type="match status" value="1"/>
</dbReference>
<dbReference type="SMART" id="SM00649">
    <property type="entry name" value="RL11"/>
    <property type="match status" value="1"/>
</dbReference>
<dbReference type="SUPFAM" id="SSF54747">
    <property type="entry name" value="Ribosomal L11/L12e N-terminal domain"/>
    <property type="match status" value="1"/>
</dbReference>
<dbReference type="SUPFAM" id="SSF46906">
    <property type="entry name" value="Ribosomal protein L11, C-terminal domain"/>
    <property type="match status" value="1"/>
</dbReference>
<dbReference type="PROSITE" id="PS00359">
    <property type="entry name" value="RIBOSOMAL_L11"/>
    <property type="match status" value="1"/>
</dbReference>
<gene>
    <name evidence="1" type="primary">rplK</name>
    <name type="ordered locus">BAbS19_I11830</name>
</gene>
<organism>
    <name type="scientific">Brucella abortus (strain S19)</name>
    <dbReference type="NCBI Taxonomy" id="430066"/>
    <lineage>
        <taxon>Bacteria</taxon>
        <taxon>Pseudomonadati</taxon>
        <taxon>Pseudomonadota</taxon>
        <taxon>Alphaproteobacteria</taxon>
        <taxon>Hyphomicrobiales</taxon>
        <taxon>Brucellaceae</taxon>
        <taxon>Brucella/Ochrobactrum group</taxon>
        <taxon>Brucella</taxon>
    </lineage>
</organism>
<keyword id="KW-0488">Methylation</keyword>
<keyword id="KW-0687">Ribonucleoprotein</keyword>
<keyword id="KW-0689">Ribosomal protein</keyword>
<keyword id="KW-0694">RNA-binding</keyword>
<keyword id="KW-0699">rRNA-binding</keyword>
<protein>
    <recommendedName>
        <fullName evidence="1">Large ribosomal subunit protein uL11</fullName>
    </recommendedName>
    <alternativeName>
        <fullName evidence="2">50S ribosomal protein L11</fullName>
    </alternativeName>
</protein>
<accession>B2S691</accession>
<name>RL11_BRUA1</name>
<reference key="1">
    <citation type="journal article" date="2008" name="PLoS ONE">
        <title>Genome sequence of Brucella abortus vaccine strain S19 compared to virulent strains yields candidate virulence genes.</title>
        <authorList>
            <person name="Crasta O.R."/>
            <person name="Folkerts O."/>
            <person name="Fei Z."/>
            <person name="Mane S.P."/>
            <person name="Evans C."/>
            <person name="Martino-Catt S."/>
            <person name="Bricker B."/>
            <person name="Yu G."/>
            <person name="Du L."/>
            <person name="Sobral B.W."/>
        </authorList>
    </citation>
    <scope>NUCLEOTIDE SEQUENCE [LARGE SCALE GENOMIC DNA]</scope>
    <source>
        <strain>S19</strain>
    </source>
</reference>
<feature type="chain" id="PRO_1000132870" description="Large ribosomal subunit protein uL11">
    <location>
        <begin position="1"/>
        <end position="142"/>
    </location>
</feature>
<comment type="function">
    <text evidence="1">Forms part of the ribosomal stalk which helps the ribosome interact with GTP-bound translation factors.</text>
</comment>
<comment type="subunit">
    <text evidence="1">Part of the ribosomal stalk of the 50S ribosomal subunit. Interacts with L10 and the large rRNA to form the base of the stalk. L10 forms an elongated spine to which L12 dimers bind in a sequential fashion forming a multimeric L10(L12)X complex.</text>
</comment>
<comment type="PTM">
    <text evidence="1">One or more lysine residues are methylated.</text>
</comment>
<comment type="similarity">
    <text evidence="1">Belongs to the universal ribosomal protein uL11 family.</text>
</comment>
<evidence type="ECO:0000255" key="1">
    <source>
        <dbReference type="HAMAP-Rule" id="MF_00736"/>
    </source>
</evidence>
<evidence type="ECO:0000305" key="2"/>